<name>HEMH_CAUVC</name>
<keyword id="KW-0001">2Fe-2S</keyword>
<keyword id="KW-0963">Cytoplasm</keyword>
<keyword id="KW-0350">Heme biosynthesis</keyword>
<keyword id="KW-0408">Iron</keyword>
<keyword id="KW-0411">Iron-sulfur</keyword>
<keyword id="KW-0456">Lyase</keyword>
<keyword id="KW-0479">Metal-binding</keyword>
<keyword id="KW-0627">Porphyrin biosynthesis</keyword>
<keyword id="KW-1185">Reference proteome</keyword>
<evidence type="ECO:0000255" key="1">
    <source>
        <dbReference type="HAMAP-Rule" id="MF_00323"/>
    </source>
</evidence>
<evidence type="ECO:0000305" key="2"/>
<accession>P57777</accession>
<protein>
    <recommendedName>
        <fullName evidence="1">Ferrochelatase</fullName>
        <ecNumber evidence="1">4.98.1.1</ecNumber>
    </recommendedName>
    <alternativeName>
        <fullName evidence="1">Heme synthase</fullName>
    </alternativeName>
    <alternativeName>
        <fullName evidence="1">Protoheme ferro-lyase</fullName>
    </alternativeName>
</protein>
<gene>
    <name evidence="1" type="primary">hemH</name>
    <name type="ordered locus">CC_3762</name>
</gene>
<comment type="function">
    <text evidence="1">Catalyzes the ferrous insertion into protoporphyrin IX.</text>
</comment>
<comment type="catalytic activity">
    <reaction evidence="1">
        <text>heme b + 2 H(+) = protoporphyrin IX + Fe(2+)</text>
        <dbReference type="Rhea" id="RHEA:22584"/>
        <dbReference type="ChEBI" id="CHEBI:15378"/>
        <dbReference type="ChEBI" id="CHEBI:29033"/>
        <dbReference type="ChEBI" id="CHEBI:57306"/>
        <dbReference type="ChEBI" id="CHEBI:60344"/>
        <dbReference type="EC" id="4.98.1.1"/>
    </reaction>
</comment>
<comment type="cofactor">
    <cofactor>
        <name>[2Fe-2S] cluster</name>
        <dbReference type="ChEBI" id="CHEBI:190135"/>
    </cofactor>
    <text>Binds 1 [2Fe-2S] cluster.</text>
</comment>
<comment type="pathway">
    <text evidence="1">Porphyrin-containing compound metabolism; protoheme biosynthesis; protoheme from protoporphyrin-IX: step 1/1.</text>
</comment>
<comment type="subunit">
    <text>Homodimer.</text>
</comment>
<comment type="subcellular location">
    <subcellularLocation>
        <location evidence="1">Cytoplasm</location>
    </subcellularLocation>
</comment>
<comment type="similarity">
    <text evidence="1 2">Belongs to the ferrochelatase family.</text>
</comment>
<reference key="1">
    <citation type="journal article" date="2002" name="J. Bacteriol.">
        <title>Identification of [2Fe-2S] clusters in microbial ferrochelatases.</title>
        <authorList>
            <person name="Dailey T.A."/>
            <person name="Dailey H.A."/>
        </authorList>
    </citation>
    <scope>NUCLEOTIDE SEQUENCE [GENOMIC DNA]</scope>
    <scope>CHARACTERIZATION OF IRON-SULFUR CLUSTER</scope>
</reference>
<reference key="2">
    <citation type="journal article" date="2001" name="Proc. Natl. Acad. Sci. U.S.A.">
        <title>Complete genome sequence of Caulobacter crescentus.</title>
        <authorList>
            <person name="Nierman W.C."/>
            <person name="Feldblyum T.V."/>
            <person name="Laub M.T."/>
            <person name="Paulsen I.T."/>
            <person name="Nelson K.E."/>
            <person name="Eisen J.A."/>
            <person name="Heidelberg J.F."/>
            <person name="Alley M.R.K."/>
            <person name="Ohta N."/>
            <person name="Maddock J.R."/>
            <person name="Potocka I."/>
            <person name="Nelson W.C."/>
            <person name="Newton A."/>
            <person name="Stephens C."/>
            <person name="Phadke N.D."/>
            <person name="Ely B."/>
            <person name="DeBoy R.T."/>
            <person name="Dodson R.J."/>
            <person name="Durkin A.S."/>
            <person name="Gwinn M.L."/>
            <person name="Haft D.H."/>
            <person name="Kolonay J.F."/>
            <person name="Smit J."/>
            <person name="Craven M.B."/>
            <person name="Khouri H.M."/>
            <person name="Shetty J."/>
            <person name="Berry K.J."/>
            <person name="Utterback T.R."/>
            <person name="Tran K."/>
            <person name="Wolf A.M."/>
            <person name="Vamathevan J.J."/>
            <person name="Ermolaeva M.D."/>
            <person name="White O."/>
            <person name="Salzberg S.L."/>
            <person name="Venter J.C."/>
            <person name="Shapiro L."/>
            <person name="Fraser C.M."/>
        </authorList>
    </citation>
    <scope>NUCLEOTIDE SEQUENCE [LARGE SCALE GENOMIC DNA]</scope>
    <source>
        <strain>ATCC 19089 / CIP 103742 / CB 15</strain>
    </source>
</reference>
<sequence>MTQKLAVVLFNLGGPDGPDAVRPFLFNLFRDPAIIGAPALIRYPLAALISTTREKSAKANYAIMGGGSPLLPETEKQARALEAALALAMPGVEAKCFIAMRYWHPLTDETARQVAAFAPDQVVLLPLYPQFSTTTTGSSLKAWKKTYKGSGVQTTVGCYPTEGGLIEAHARMIRESWEKAGSPTNIRLLFSAHGLPEKVILAGDPYQKQVEATAAAVAAHLPPQIEWTVCYQSRVGPLKWIGPSTDDEIRRAGGEDKGVMITPIAFVSEHVETLVELDHEYAELAEEVGAAPYLRVSALGTAPEFIDGLAKAVRDSVGKAPGTVSSACGWRCGADWSKCPCREGASA</sequence>
<proteinExistence type="evidence at protein level"/>
<feature type="chain" id="PRO_0000175126" description="Ferrochelatase">
    <location>
        <begin position="1"/>
        <end position="347"/>
    </location>
</feature>
<feature type="binding site">
    <location>
        <position position="158"/>
    </location>
    <ligand>
        <name>[2Fe-2S] cluster</name>
        <dbReference type="ChEBI" id="CHEBI:190135"/>
    </ligand>
</feature>
<feature type="binding site" evidence="1">
    <location>
        <position position="193"/>
    </location>
    <ligand>
        <name>Fe cation</name>
        <dbReference type="ChEBI" id="CHEBI:24875"/>
    </ligand>
</feature>
<feature type="binding site" evidence="1">
    <location>
        <position position="272"/>
    </location>
    <ligand>
        <name>Fe cation</name>
        <dbReference type="ChEBI" id="CHEBI:24875"/>
    </ligand>
</feature>
<feature type="binding site">
    <location>
        <position position="332"/>
    </location>
    <ligand>
        <name>[2Fe-2S] cluster</name>
        <dbReference type="ChEBI" id="CHEBI:190135"/>
    </ligand>
</feature>
<feature type="binding site">
    <location>
        <position position="339"/>
    </location>
    <ligand>
        <name>[2Fe-2S] cluster</name>
        <dbReference type="ChEBI" id="CHEBI:190135"/>
    </ligand>
</feature>
<feature type="binding site">
    <location>
        <position position="341"/>
    </location>
    <ligand>
        <name>[2Fe-2S] cluster</name>
        <dbReference type="ChEBI" id="CHEBI:190135"/>
    </ligand>
</feature>
<organism>
    <name type="scientific">Caulobacter vibrioides (strain ATCC 19089 / CIP 103742 / CB 15)</name>
    <name type="common">Caulobacter crescentus</name>
    <dbReference type="NCBI Taxonomy" id="190650"/>
    <lineage>
        <taxon>Bacteria</taxon>
        <taxon>Pseudomonadati</taxon>
        <taxon>Pseudomonadota</taxon>
        <taxon>Alphaproteobacteria</taxon>
        <taxon>Caulobacterales</taxon>
        <taxon>Caulobacteraceae</taxon>
        <taxon>Caulobacter</taxon>
    </lineage>
</organism>
<dbReference type="EC" id="4.98.1.1" evidence="1"/>
<dbReference type="EMBL" id="AF184071">
    <property type="protein sequence ID" value="AAG12242.1"/>
    <property type="molecule type" value="Genomic_DNA"/>
</dbReference>
<dbReference type="EMBL" id="AE005673">
    <property type="protein sequence ID" value="AAK25724.1"/>
    <property type="molecule type" value="Genomic_DNA"/>
</dbReference>
<dbReference type="PIR" id="H87715">
    <property type="entry name" value="H87715"/>
</dbReference>
<dbReference type="RefSeq" id="NP_422556.1">
    <property type="nucleotide sequence ID" value="NC_002696.2"/>
</dbReference>
<dbReference type="RefSeq" id="WP_010921589.1">
    <property type="nucleotide sequence ID" value="NC_002696.2"/>
</dbReference>
<dbReference type="SMR" id="P57777"/>
<dbReference type="STRING" id="190650.CC_3762"/>
<dbReference type="EnsemblBacteria" id="AAK25724">
    <property type="protein sequence ID" value="AAK25724"/>
    <property type="gene ID" value="CC_3762"/>
</dbReference>
<dbReference type="KEGG" id="ccr:CC_3762"/>
<dbReference type="PATRIC" id="fig|190650.5.peg.3764"/>
<dbReference type="eggNOG" id="COG0276">
    <property type="taxonomic scope" value="Bacteria"/>
</dbReference>
<dbReference type="HOGENOM" id="CLU_018884_4_1_5"/>
<dbReference type="BioCyc" id="CAULO:CC3762-MONOMER"/>
<dbReference type="UniPathway" id="UPA00252">
    <property type="reaction ID" value="UER00325"/>
</dbReference>
<dbReference type="Proteomes" id="UP000001816">
    <property type="component" value="Chromosome"/>
</dbReference>
<dbReference type="GO" id="GO:0005737">
    <property type="term" value="C:cytoplasm"/>
    <property type="evidence" value="ECO:0007669"/>
    <property type="project" value="UniProtKB-SubCell"/>
</dbReference>
<dbReference type="GO" id="GO:0051537">
    <property type="term" value="F:2 iron, 2 sulfur cluster binding"/>
    <property type="evidence" value="ECO:0007669"/>
    <property type="project" value="UniProtKB-KW"/>
</dbReference>
<dbReference type="GO" id="GO:0004325">
    <property type="term" value="F:ferrochelatase activity"/>
    <property type="evidence" value="ECO:0007669"/>
    <property type="project" value="UniProtKB-UniRule"/>
</dbReference>
<dbReference type="GO" id="GO:0046872">
    <property type="term" value="F:metal ion binding"/>
    <property type="evidence" value="ECO:0007669"/>
    <property type="project" value="UniProtKB-KW"/>
</dbReference>
<dbReference type="GO" id="GO:0006783">
    <property type="term" value="P:heme biosynthetic process"/>
    <property type="evidence" value="ECO:0007669"/>
    <property type="project" value="UniProtKB-UniRule"/>
</dbReference>
<dbReference type="CDD" id="cd00419">
    <property type="entry name" value="Ferrochelatase_C"/>
    <property type="match status" value="1"/>
</dbReference>
<dbReference type="CDD" id="cd03411">
    <property type="entry name" value="Ferrochelatase_N"/>
    <property type="match status" value="1"/>
</dbReference>
<dbReference type="Gene3D" id="3.40.50.1400">
    <property type="match status" value="2"/>
</dbReference>
<dbReference type="HAMAP" id="MF_00323">
    <property type="entry name" value="Ferrochelatase"/>
    <property type="match status" value="1"/>
</dbReference>
<dbReference type="InterPro" id="IPR001015">
    <property type="entry name" value="Ferrochelatase"/>
</dbReference>
<dbReference type="InterPro" id="IPR019772">
    <property type="entry name" value="Ferrochelatase_AS"/>
</dbReference>
<dbReference type="InterPro" id="IPR033644">
    <property type="entry name" value="Ferrochelatase_C"/>
</dbReference>
<dbReference type="InterPro" id="IPR033659">
    <property type="entry name" value="Ferrochelatase_N"/>
</dbReference>
<dbReference type="NCBIfam" id="TIGR00109">
    <property type="entry name" value="hemH"/>
    <property type="match status" value="1"/>
</dbReference>
<dbReference type="PANTHER" id="PTHR11108">
    <property type="entry name" value="FERROCHELATASE"/>
    <property type="match status" value="1"/>
</dbReference>
<dbReference type="PANTHER" id="PTHR11108:SF1">
    <property type="entry name" value="FERROCHELATASE, MITOCHONDRIAL"/>
    <property type="match status" value="1"/>
</dbReference>
<dbReference type="Pfam" id="PF00762">
    <property type="entry name" value="Ferrochelatase"/>
    <property type="match status" value="1"/>
</dbReference>
<dbReference type="SUPFAM" id="SSF53800">
    <property type="entry name" value="Chelatase"/>
    <property type="match status" value="1"/>
</dbReference>
<dbReference type="PROSITE" id="PS00534">
    <property type="entry name" value="FERROCHELATASE"/>
    <property type="match status" value="1"/>
</dbReference>